<evidence type="ECO:0000250" key="1">
    <source>
        <dbReference type="UniProtKB" id="A1L3T7"/>
    </source>
</evidence>
<evidence type="ECO:0000256" key="2">
    <source>
        <dbReference type="SAM" id="MobiDB-lite"/>
    </source>
</evidence>
<evidence type="ECO:0000269" key="3">
    <source>
    </source>
</evidence>
<evidence type="ECO:0000303" key="4">
    <source>
    </source>
</evidence>
<evidence type="ECO:0000305" key="5"/>
<evidence type="ECO:0000312" key="6">
    <source>
        <dbReference type="HGNC" id="HGNC:16168"/>
    </source>
</evidence>
<evidence type="ECO:0007744" key="7">
    <source>
    </source>
</evidence>
<sequence>MSVRLRFLSPGDTGAVGVVGRSASFAGFSSAQSRRIAKSINRNSVRSRMPAKSSKMYGTLRKGSVCADPKPQQVKKIFEALKRGLKEYLCVQQAELDHLSGRHKDTRRNSRLAFYYDLDKQTRCVERHIRKMEFHISKVDELYEDYCIQCRLRDGASSMQRAFARCPPSRAARESLQELGRSLHECAEDMWLIEGALEVHLGEFHIRMKGLVGYARLCPGDHYEVLMRLGRQRWKLKGRIESDDSQTWDEEEKAFIPTLHENLDIKVTELRGLGSLAVGAVTCDIADFFTTRPQVIVVDITELGTIKLQLEVQWNPFDTESFLVSPSPTGKFSMGSRKGSLYNWTPPSTPSFRERYYLSVLQQPTQQALLLGGPRATSILSYLSDSDLRGPSLRSQSQELPEMDSFSSEDPRDTETSTSASTSDVGFLPLTFGPHASIEEEAREDPLPPGLLPEMAHLSGGPFAEQPGWRNLGGESPSLPQGSLFHSGTASSSQNGHEEGATGDREDGPGVALEGPLQEVLELLRPTDSTQPQLRELEYQVLGFRDRLKPCRARQEHTSAESLMECILESFAFLNADFALDELSLFGGSQGLRKDRPLPPPSSLKASSRELTAGAPELDVLLMVHLQVCKALLQKLASPNLSRLVQECLLEEVAQQKHVLETLSVLDFEKVGKATSIEEIIPQASRTKGCLKLWRGCTGPGRVLSCPATTLLNQLKKTFQHRVRGKYPGQLEIACRRLLEQVVSCGGLLPGAGLPEEQIITWFQFHSYLQRQSVSDLEKHFTQLTKEVTLIEELHCAGQAKVVRKLQGKRLGQLQPLPQTLRAWALLQLDGTPRVCRAASARLAGAVRNRSFREKALLFYTNALAENDARLQQAACLALKHLKGIESIDQTASLCQSDLEAVRAAARETTLSFGEKGRLAFEKMDKLCSEQREVFCQEADVEITIF</sequence>
<accession>Q96MK2</accession>
<accession>Q5QPB6</accession>
<accession>Q9NQQ2</accession>
<comment type="interaction">
    <interactant intactId="EBI-12010512">
        <id>Q96MK2</id>
    </interactant>
    <interactant intactId="EBI-11977221">
        <id>Q86Z20</id>
        <label>CCDC125</label>
    </interactant>
    <organismsDiffer>false</organismsDiffer>
    <experiments>3</experiments>
</comment>
<comment type="interaction">
    <interactant intactId="EBI-12010512">
        <id>Q96MK2</id>
    </interactant>
    <interactant intactId="EBI-446668">
        <id>P61586</id>
        <label>RHOA</label>
    </interactant>
    <organismsDiffer>false</organismsDiffer>
    <experiments>4</experiments>
</comment>
<comment type="interaction">
    <interactant intactId="EBI-12010512">
        <id>Q96MK2</id>
    </interactant>
    <interactant intactId="EBI-747589">
        <id>P08134</id>
        <label>RHOC</label>
    </interactant>
    <organismsDiffer>false</organismsDiffer>
    <experiments>3</experiments>
</comment>
<comment type="interaction">
    <interactant intactId="EBI-12010512">
        <id>Q96MK2</id>
    </interactant>
    <interactant intactId="EBI-17182094">
        <id>Q8N228-3</id>
        <label>SCML4</label>
    </interactant>
    <organismsDiffer>false</organismsDiffer>
    <experiments>3</experiments>
</comment>
<comment type="interaction">
    <interactant intactId="EBI-12010512">
        <id>Q96MK2</id>
    </interactant>
    <interactant intactId="EBI-11959011">
        <id>Q9UPX8-4</id>
        <label>SHANK2</label>
    </interactant>
    <organismsDiffer>false</organismsDiffer>
    <experiments>3</experiments>
</comment>
<comment type="interaction">
    <interactant intactId="EBI-12010512">
        <id>Q96MK2</id>
    </interactant>
    <interactant intactId="EBI-359224">
        <id>Q13077</id>
        <label>TRAF1</label>
    </interactant>
    <organismsDiffer>false</organismsDiffer>
    <experiments>3</experiments>
</comment>
<comment type="alternative products">
    <event type="alternative splicing"/>
    <isoform>
        <id>Q96MK2-1</id>
        <name>1</name>
        <sequence type="displayed"/>
    </isoform>
    <isoform>
        <id>Q96MK2-2</id>
        <name>2</name>
        <sequence type="described" ref="VSP_026496"/>
    </isoform>
</comment>
<comment type="similarity">
    <text evidence="5">Belongs to the RIPOR family.</text>
</comment>
<gene>
    <name evidence="6" type="primary">RIPOR3</name>
    <name evidence="6" type="synonym">C20orf175</name>
    <name evidence="6" type="synonym">C20orf176</name>
    <name evidence="6" type="synonym">FAM65C</name>
</gene>
<dbReference type="EMBL" id="AK056792">
    <property type="protein sequence ID" value="BAB71286.1"/>
    <property type="molecule type" value="mRNA"/>
</dbReference>
<dbReference type="EMBL" id="AL133230">
    <property type="status" value="NOT_ANNOTATED_CDS"/>
    <property type="molecule type" value="Genomic_DNA"/>
</dbReference>
<dbReference type="CCDS" id="CCDS13431.2">
    <molecule id="Q96MK2-1"/>
</dbReference>
<dbReference type="RefSeq" id="NP_543019.2">
    <molecule id="Q96MK2-1"/>
    <property type="nucleotide sequence ID" value="NM_080829.4"/>
</dbReference>
<dbReference type="RefSeq" id="XP_011526881.1">
    <molecule id="Q96MK2-1"/>
    <property type="nucleotide sequence ID" value="XM_011528579.3"/>
</dbReference>
<dbReference type="RefSeq" id="XP_011526882.1">
    <property type="nucleotide sequence ID" value="XM_011528580.2"/>
</dbReference>
<dbReference type="RefSeq" id="XP_011526883.1">
    <property type="nucleotide sequence ID" value="XM_011528581.2"/>
</dbReference>
<dbReference type="RefSeq" id="XP_047295868.1">
    <molecule id="Q96MK2-1"/>
    <property type="nucleotide sequence ID" value="XM_047439912.1"/>
</dbReference>
<dbReference type="RefSeq" id="XP_047295869.1">
    <molecule id="Q96MK2-1"/>
    <property type="nucleotide sequence ID" value="XM_047439913.1"/>
</dbReference>
<dbReference type="RefSeq" id="XP_054179013.1">
    <molecule id="Q96MK2-1"/>
    <property type="nucleotide sequence ID" value="XM_054323038.1"/>
</dbReference>
<dbReference type="RefSeq" id="XP_054179014.1">
    <molecule id="Q96MK2-1"/>
    <property type="nucleotide sequence ID" value="XM_054323039.1"/>
</dbReference>
<dbReference type="RefSeq" id="XP_054179015.1">
    <molecule id="Q96MK2-1"/>
    <property type="nucleotide sequence ID" value="XM_054323040.1"/>
</dbReference>
<dbReference type="SMR" id="Q96MK2"/>
<dbReference type="BioGRID" id="126746">
    <property type="interactions" value="10"/>
</dbReference>
<dbReference type="FunCoup" id="Q96MK2">
    <property type="interactions" value="102"/>
</dbReference>
<dbReference type="IntAct" id="Q96MK2">
    <property type="interactions" value="10"/>
</dbReference>
<dbReference type="STRING" id="9606.ENSP00000045083"/>
<dbReference type="GlyGen" id="Q96MK2">
    <property type="glycosylation" value="2 sites, 1 O-linked glycan (1 site)"/>
</dbReference>
<dbReference type="iPTMnet" id="Q96MK2"/>
<dbReference type="PhosphoSitePlus" id="Q96MK2"/>
<dbReference type="BioMuta" id="RIPOR3"/>
<dbReference type="DMDM" id="152031578"/>
<dbReference type="jPOST" id="Q96MK2"/>
<dbReference type="MassIVE" id="Q96MK2"/>
<dbReference type="PaxDb" id="9606-ENSP00000332663"/>
<dbReference type="PeptideAtlas" id="Q96MK2"/>
<dbReference type="ProteomicsDB" id="77368">
    <molecule id="Q96MK2-1"/>
</dbReference>
<dbReference type="ProteomicsDB" id="77369">
    <molecule id="Q96MK2-2"/>
</dbReference>
<dbReference type="Antibodypedia" id="66212">
    <property type="antibodies" value="61 antibodies from 13 providers"/>
</dbReference>
<dbReference type="DNASU" id="140876"/>
<dbReference type="Ensembl" id="ENST00000045083.6">
    <molecule id="Q96MK2-1"/>
    <property type="protein sequence ID" value="ENSP00000045083.2"/>
    <property type="gene ID" value="ENSG00000042062.13"/>
</dbReference>
<dbReference type="GeneID" id="140876"/>
<dbReference type="KEGG" id="hsa:140876"/>
<dbReference type="UCSC" id="uc002xvm.4">
    <molecule id="Q96MK2-1"/>
    <property type="organism name" value="human"/>
</dbReference>
<dbReference type="AGR" id="HGNC:16168"/>
<dbReference type="CTD" id="140876"/>
<dbReference type="DisGeNET" id="140876"/>
<dbReference type="GeneCards" id="RIPOR3"/>
<dbReference type="HGNC" id="HGNC:16168">
    <property type="gene designation" value="RIPOR3"/>
</dbReference>
<dbReference type="HPA" id="ENSG00000042062">
    <property type="expression patterns" value="Low tissue specificity"/>
</dbReference>
<dbReference type="neXtProt" id="NX_Q96MK2"/>
<dbReference type="OpenTargets" id="ENSG00000042062"/>
<dbReference type="PharmGKB" id="PA162387710"/>
<dbReference type="VEuPathDB" id="HostDB:ENSG00000042062"/>
<dbReference type="eggNOG" id="ENOG502QY15">
    <property type="taxonomic scope" value="Eukaryota"/>
</dbReference>
<dbReference type="GeneTree" id="ENSGT00940000153717"/>
<dbReference type="HOGENOM" id="CLU_006211_1_0_1"/>
<dbReference type="InParanoid" id="Q96MK2"/>
<dbReference type="OMA" id="ELDYLCG"/>
<dbReference type="OrthoDB" id="9999654at2759"/>
<dbReference type="PAN-GO" id="Q96MK2">
    <property type="GO annotations" value="0 GO annotations based on evolutionary models"/>
</dbReference>
<dbReference type="PhylomeDB" id="Q96MK2"/>
<dbReference type="TreeFam" id="TF329332"/>
<dbReference type="PathwayCommons" id="Q96MK2"/>
<dbReference type="SignaLink" id="Q96MK2"/>
<dbReference type="BioGRID-ORCS" id="140876">
    <property type="hits" value="10 hits in 1157 CRISPR screens"/>
</dbReference>
<dbReference type="ChiTaRS" id="FAM65C">
    <property type="organism name" value="human"/>
</dbReference>
<dbReference type="GenomeRNAi" id="140876"/>
<dbReference type="Pharos" id="Q96MK2">
    <property type="development level" value="Tdark"/>
</dbReference>
<dbReference type="PRO" id="PR:Q96MK2"/>
<dbReference type="Proteomes" id="UP000005640">
    <property type="component" value="Chromosome 20"/>
</dbReference>
<dbReference type="RNAct" id="Q96MK2">
    <property type="molecule type" value="protein"/>
</dbReference>
<dbReference type="Bgee" id="ENSG00000042062">
    <property type="expression patterns" value="Expressed in endocervix and 124 other cell types or tissues"/>
</dbReference>
<dbReference type="ExpressionAtlas" id="Q96MK2">
    <property type="expression patterns" value="baseline and differential"/>
</dbReference>
<dbReference type="InterPro" id="IPR031780">
    <property type="entry name" value="FAM65_N"/>
</dbReference>
<dbReference type="InterPro" id="IPR026136">
    <property type="entry name" value="RIPOR3"/>
</dbReference>
<dbReference type="PANTHER" id="PTHR15829">
    <property type="entry name" value="PROTEIN KINASE PKN/PRK1, EFFECTOR"/>
    <property type="match status" value="1"/>
</dbReference>
<dbReference type="PANTHER" id="PTHR15829:SF15">
    <property type="entry name" value="RIPOR FAMILY MEMBER 3"/>
    <property type="match status" value="1"/>
</dbReference>
<dbReference type="Pfam" id="PF15903">
    <property type="entry name" value="PL48"/>
    <property type="match status" value="1"/>
</dbReference>
<feature type="chain" id="PRO_0000079484" description="RIPOR family member 3">
    <location>
        <begin position="1"/>
        <end position="946"/>
    </location>
</feature>
<feature type="region of interest" description="Disordered" evidence="2">
    <location>
        <begin position="390"/>
        <end position="512"/>
    </location>
</feature>
<feature type="compositionally biased region" description="Basic and acidic residues" evidence="2">
    <location>
        <begin position="437"/>
        <end position="446"/>
    </location>
</feature>
<feature type="compositionally biased region" description="Polar residues" evidence="2">
    <location>
        <begin position="478"/>
        <end position="495"/>
    </location>
</feature>
<feature type="compositionally biased region" description="Basic and acidic residues" evidence="2">
    <location>
        <begin position="496"/>
        <end position="508"/>
    </location>
</feature>
<feature type="modified residue" description="Phosphoserine" evidence="7">
    <location>
        <position position="9"/>
    </location>
</feature>
<feature type="modified residue" description="Phosphoserine" evidence="7">
    <location>
        <position position="24"/>
    </location>
</feature>
<feature type="modified residue" description="Phosphoserine" evidence="7">
    <location>
        <position position="340"/>
    </location>
</feature>
<feature type="modified residue" description="Phosphothreonine" evidence="7">
    <location>
        <position position="345"/>
    </location>
</feature>
<feature type="modified residue" description="Phosphoserine" evidence="1">
    <location>
        <position position="351"/>
    </location>
</feature>
<feature type="modified residue" description="Phosphoserine" evidence="7">
    <location>
        <position position="384"/>
    </location>
</feature>
<feature type="splice variant" id="VSP_026496" description="In isoform 2." evidence="4">
    <location>
        <begin position="594"/>
        <end position="946"/>
    </location>
</feature>
<feature type="sequence variant" id="VAR_062194" description="In dbSNP:rs35965508.">
    <original>C</original>
    <variation>S</variation>
    <location>
        <position position="566"/>
    </location>
</feature>
<feature type="sequence variant" id="VAR_053914" description="In dbSNP:rs6020624." evidence="3">
    <original>L</original>
    <variation>P</variation>
    <location>
        <position position="580"/>
    </location>
</feature>
<feature type="sequence conflict" description="In Ref. 1; BAB71286." evidence="5" ref="1">
    <original>H</original>
    <variation>L</variation>
    <location>
        <position position="557"/>
    </location>
</feature>
<feature type="sequence conflict" description="In Ref. 1; BAB71286." evidence="5" ref="1">
    <original>M</original>
    <variation>I</variation>
    <location>
        <position position="564"/>
    </location>
</feature>
<protein>
    <recommendedName>
        <fullName evidence="6">RIPOR family member 3</fullName>
    </recommendedName>
</protein>
<proteinExistence type="evidence at protein level"/>
<organism>
    <name type="scientific">Homo sapiens</name>
    <name type="common">Human</name>
    <dbReference type="NCBI Taxonomy" id="9606"/>
    <lineage>
        <taxon>Eukaryota</taxon>
        <taxon>Metazoa</taxon>
        <taxon>Chordata</taxon>
        <taxon>Craniata</taxon>
        <taxon>Vertebrata</taxon>
        <taxon>Euteleostomi</taxon>
        <taxon>Mammalia</taxon>
        <taxon>Eutheria</taxon>
        <taxon>Euarchontoglires</taxon>
        <taxon>Primates</taxon>
        <taxon>Haplorrhini</taxon>
        <taxon>Catarrhini</taxon>
        <taxon>Hominidae</taxon>
        <taxon>Homo</taxon>
    </lineage>
</organism>
<keyword id="KW-0025">Alternative splicing</keyword>
<keyword id="KW-0597">Phosphoprotein</keyword>
<keyword id="KW-1267">Proteomics identification</keyword>
<keyword id="KW-1185">Reference proteome</keyword>
<name>RIPR3_HUMAN</name>
<reference key="1">
    <citation type="journal article" date="2004" name="Nat. Genet.">
        <title>Complete sequencing and characterization of 21,243 full-length human cDNAs.</title>
        <authorList>
            <person name="Ota T."/>
            <person name="Suzuki Y."/>
            <person name="Nishikawa T."/>
            <person name="Otsuki T."/>
            <person name="Sugiyama T."/>
            <person name="Irie R."/>
            <person name="Wakamatsu A."/>
            <person name="Hayashi K."/>
            <person name="Sato H."/>
            <person name="Nagai K."/>
            <person name="Kimura K."/>
            <person name="Makita H."/>
            <person name="Sekine M."/>
            <person name="Obayashi M."/>
            <person name="Nishi T."/>
            <person name="Shibahara T."/>
            <person name="Tanaka T."/>
            <person name="Ishii S."/>
            <person name="Yamamoto J."/>
            <person name="Saito K."/>
            <person name="Kawai Y."/>
            <person name="Isono Y."/>
            <person name="Nakamura Y."/>
            <person name="Nagahari K."/>
            <person name="Murakami K."/>
            <person name="Yasuda T."/>
            <person name="Iwayanagi T."/>
            <person name="Wagatsuma M."/>
            <person name="Shiratori A."/>
            <person name="Sudo H."/>
            <person name="Hosoiri T."/>
            <person name="Kaku Y."/>
            <person name="Kodaira H."/>
            <person name="Kondo H."/>
            <person name="Sugawara M."/>
            <person name="Takahashi M."/>
            <person name="Kanda K."/>
            <person name="Yokoi T."/>
            <person name="Furuya T."/>
            <person name="Kikkawa E."/>
            <person name="Omura Y."/>
            <person name="Abe K."/>
            <person name="Kamihara K."/>
            <person name="Katsuta N."/>
            <person name="Sato K."/>
            <person name="Tanikawa M."/>
            <person name="Yamazaki M."/>
            <person name="Ninomiya K."/>
            <person name="Ishibashi T."/>
            <person name="Yamashita H."/>
            <person name="Murakawa K."/>
            <person name="Fujimori K."/>
            <person name="Tanai H."/>
            <person name="Kimata M."/>
            <person name="Watanabe M."/>
            <person name="Hiraoka S."/>
            <person name="Chiba Y."/>
            <person name="Ishida S."/>
            <person name="Ono Y."/>
            <person name="Takiguchi S."/>
            <person name="Watanabe S."/>
            <person name="Yosida M."/>
            <person name="Hotuta T."/>
            <person name="Kusano J."/>
            <person name="Kanehori K."/>
            <person name="Takahashi-Fujii A."/>
            <person name="Hara H."/>
            <person name="Tanase T.-O."/>
            <person name="Nomura Y."/>
            <person name="Togiya S."/>
            <person name="Komai F."/>
            <person name="Hara R."/>
            <person name="Takeuchi K."/>
            <person name="Arita M."/>
            <person name="Imose N."/>
            <person name="Musashino K."/>
            <person name="Yuuki H."/>
            <person name="Oshima A."/>
            <person name="Sasaki N."/>
            <person name="Aotsuka S."/>
            <person name="Yoshikawa Y."/>
            <person name="Matsunawa H."/>
            <person name="Ichihara T."/>
            <person name="Shiohata N."/>
            <person name="Sano S."/>
            <person name="Moriya S."/>
            <person name="Momiyama H."/>
            <person name="Satoh N."/>
            <person name="Takami S."/>
            <person name="Terashima Y."/>
            <person name="Suzuki O."/>
            <person name="Nakagawa S."/>
            <person name="Senoh A."/>
            <person name="Mizoguchi H."/>
            <person name="Goto Y."/>
            <person name="Shimizu F."/>
            <person name="Wakebe H."/>
            <person name="Hishigaki H."/>
            <person name="Watanabe T."/>
            <person name="Sugiyama A."/>
            <person name="Takemoto M."/>
            <person name="Kawakami B."/>
            <person name="Yamazaki M."/>
            <person name="Watanabe K."/>
            <person name="Kumagai A."/>
            <person name="Itakura S."/>
            <person name="Fukuzumi Y."/>
            <person name="Fujimori Y."/>
            <person name="Komiyama M."/>
            <person name="Tashiro H."/>
            <person name="Tanigami A."/>
            <person name="Fujiwara T."/>
            <person name="Ono T."/>
            <person name="Yamada K."/>
            <person name="Fujii Y."/>
            <person name="Ozaki K."/>
            <person name="Hirao M."/>
            <person name="Ohmori Y."/>
            <person name="Kawabata A."/>
            <person name="Hikiji T."/>
            <person name="Kobatake N."/>
            <person name="Inagaki H."/>
            <person name="Ikema Y."/>
            <person name="Okamoto S."/>
            <person name="Okitani R."/>
            <person name="Kawakami T."/>
            <person name="Noguchi S."/>
            <person name="Itoh T."/>
            <person name="Shigeta K."/>
            <person name="Senba T."/>
            <person name="Matsumura K."/>
            <person name="Nakajima Y."/>
            <person name="Mizuno T."/>
            <person name="Morinaga M."/>
            <person name="Sasaki M."/>
            <person name="Togashi T."/>
            <person name="Oyama M."/>
            <person name="Hata H."/>
            <person name="Watanabe M."/>
            <person name="Komatsu T."/>
            <person name="Mizushima-Sugano J."/>
            <person name="Satoh T."/>
            <person name="Shirai Y."/>
            <person name="Takahashi Y."/>
            <person name="Nakagawa K."/>
            <person name="Okumura K."/>
            <person name="Nagase T."/>
            <person name="Nomura N."/>
            <person name="Kikuchi H."/>
            <person name="Masuho Y."/>
            <person name="Yamashita R."/>
            <person name="Nakai K."/>
            <person name="Yada T."/>
            <person name="Nakamura Y."/>
            <person name="Ohara O."/>
            <person name="Isogai T."/>
            <person name="Sugano S."/>
        </authorList>
    </citation>
    <scope>NUCLEOTIDE SEQUENCE [LARGE SCALE MRNA] (ISOFORM 2)</scope>
    <scope>VARIANT PRO-580</scope>
    <source>
        <tissue>Placenta</tissue>
    </source>
</reference>
<reference key="2">
    <citation type="journal article" date="2001" name="Nature">
        <title>The DNA sequence and comparative analysis of human chromosome 20.</title>
        <authorList>
            <person name="Deloukas P."/>
            <person name="Matthews L.H."/>
            <person name="Ashurst J.L."/>
            <person name="Burton J."/>
            <person name="Gilbert J.G.R."/>
            <person name="Jones M."/>
            <person name="Stavrides G."/>
            <person name="Almeida J.P."/>
            <person name="Babbage A.K."/>
            <person name="Bagguley C.L."/>
            <person name="Bailey J."/>
            <person name="Barlow K.F."/>
            <person name="Bates K.N."/>
            <person name="Beard L.M."/>
            <person name="Beare D.M."/>
            <person name="Beasley O.P."/>
            <person name="Bird C.P."/>
            <person name="Blakey S.E."/>
            <person name="Bridgeman A.M."/>
            <person name="Brown A.J."/>
            <person name="Buck D."/>
            <person name="Burrill W.D."/>
            <person name="Butler A.P."/>
            <person name="Carder C."/>
            <person name="Carter N.P."/>
            <person name="Chapman J.C."/>
            <person name="Clamp M."/>
            <person name="Clark G."/>
            <person name="Clark L.N."/>
            <person name="Clark S.Y."/>
            <person name="Clee C.M."/>
            <person name="Clegg S."/>
            <person name="Cobley V.E."/>
            <person name="Collier R.E."/>
            <person name="Connor R.E."/>
            <person name="Corby N.R."/>
            <person name="Coulson A."/>
            <person name="Coville G.J."/>
            <person name="Deadman R."/>
            <person name="Dhami P.D."/>
            <person name="Dunn M."/>
            <person name="Ellington A.G."/>
            <person name="Frankland J.A."/>
            <person name="Fraser A."/>
            <person name="French L."/>
            <person name="Garner P."/>
            <person name="Grafham D.V."/>
            <person name="Griffiths C."/>
            <person name="Griffiths M.N.D."/>
            <person name="Gwilliam R."/>
            <person name="Hall R.E."/>
            <person name="Hammond S."/>
            <person name="Harley J.L."/>
            <person name="Heath P.D."/>
            <person name="Ho S."/>
            <person name="Holden J.L."/>
            <person name="Howden P.J."/>
            <person name="Huckle E."/>
            <person name="Hunt A.R."/>
            <person name="Hunt S.E."/>
            <person name="Jekosch K."/>
            <person name="Johnson C.M."/>
            <person name="Johnson D."/>
            <person name="Kay M.P."/>
            <person name="Kimberley A.M."/>
            <person name="King A."/>
            <person name="Knights A."/>
            <person name="Laird G.K."/>
            <person name="Lawlor S."/>
            <person name="Lehvaeslaiho M.H."/>
            <person name="Leversha M.A."/>
            <person name="Lloyd C."/>
            <person name="Lloyd D.M."/>
            <person name="Lovell J.D."/>
            <person name="Marsh V.L."/>
            <person name="Martin S.L."/>
            <person name="McConnachie L.J."/>
            <person name="McLay K."/>
            <person name="McMurray A.A."/>
            <person name="Milne S.A."/>
            <person name="Mistry D."/>
            <person name="Moore M.J.F."/>
            <person name="Mullikin J.C."/>
            <person name="Nickerson T."/>
            <person name="Oliver K."/>
            <person name="Parker A."/>
            <person name="Patel R."/>
            <person name="Pearce T.A.V."/>
            <person name="Peck A.I."/>
            <person name="Phillimore B.J.C.T."/>
            <person name="Prathalingam S.R."/>
            <person name="Plumb R.W."/>
            <person name="Ramsay H."/>
            <person name="Rice C.M."/>
            <person name="Ross M.T."/>
            <person name="Scott C.E."/>
            <person name="Sehra H.K."/>
            <person name="Shownkeen R."/>
            <person name="Sims S."/>
            <person name="Skuce C.D."/>
            <person name="Smith M.L."/>
            <person name="Soderlund C."/>
            <person name="Steward C.A."/>
            <person name="Sulston J.E."/>
            <person name="Swann R.M."/>
            <person name="Sycamore N."/>
            <person name="Taylor R."/>
            <person name="Tee L."/>
            <person name="Thomas D.W."/>
            <person name="Thorpe A."/>
            <person name="Tracey A."/>
            <person name="Tromans A.C."/>
            <person name="Vaudin M."/>
            <person name="Wall M."/>
            <person name="Wallis J.M."/>
            <person name="Whitehead S.L."/>
            <person name="Whittaker P."/>
            <person name="Willey D.L."/>
            <person name="Williams L."/>
            <person name="Williams S.A."/>
            <person name="Wilming L."/>
            <person name="Wray P.W."/>
            <person name="Hubbard T."/>
            <person name="Durbin R.M."/>
            <person name="Bentley D.R."/>
            <person name="Beck S."/>
            <person name="Rogers J."/>
        </authorList>
    </citation>
    <scope>NUCLEOTIDE SEQUENCE [LARGE SCALE GENOMIC DNA]</scope>
</reference>
<reference key="3">
    <citation type="journal article" date="2013" name="J. Proteome Res.">
        <title>Toward a comprehensive characterization of a human cancer cell phosphoproteome.</title>
        <authorList>
            <person name="Zhou H."/>
            <person name="Di Palma S."/>
            <person name="Preisinger C."/>
            <person name="Peng M."/>
            <person name="Polat A.N."/>
            <person name="Heck A.J."/>
            <person name="Mohammed S."/>
        </authorList>
    </citation>
    <scope>PHOSPHORYLATION [LARGE SCALE ANALYSIS] AT SER-9; SER-24; SER-340; THR-345 AND SER-384</scope>
    <scope>IDENTIFICATION BY MASS SPECTROMETRY [LARGE SCALE ANALYSIS]</scope>
    <source>
        <tissue>Erythroleukemia</tissue>
    </source>
</reference>